<organism>
    <name type="scientific">Bacillus subtilis (strain 168)</name>
    <dbReference type="NCBI Taxonomy" id="224308"/>
    <lineage>
        <taxon>Bacteria</taxon>
        <taxon>Bacillati</taxon>
        <taxon>Bacillota</taxon>
        <taxon>Bacilli</taxon>
        <taxon>Bacillales</taxon>
        <taxon>Bacillaceae</taxon>
        <taxon>Bacillus</taxon>
    </lineage>
</organism>
<protein>
    <recommendedName>
        <fullName>Uncharacterized isochorismatase family protein PncA</fullName>
        <ecNumber>3.-.-.-</ecNumber>
    </recommendedName>
</protein>
<evidence type="ECO:0000305" key="1"/>
<feature type="chain" id="PRO_0000361665" description="Uncharacterized isochorismatase family protein PncA">
    <location>
        <begin position="1"/>
        <end position="183"/>
    </location>
</feature>
<dbReference type="EC" id="3.-.-.-"/>
<dbReference type="EMBL" id="AL009126">
    <property type="protein sequence ID" value="CAB15164.1"/>
    <property type="molecule type" value="Genomic_DNA"/>
</dbReference>
<dbReference type="PIR" id="C70008">
    <property type="entry name" value="C70008"/>
</dbReference>
<dbReference type="RefSeq" id="NP_391054.1">
    <property type="nucleotide sequence ID" value="NC_000964.3"/>
</dbReference>
<dbReference type="RefSeq" id="WP_003243099.1">
    <property type="nucleotide sequence ID" value="NZ_OZ025638.1"/>
</dbReference>
<dbReference type="SMR" id="O32091"/>
<dbReference type="FunCoup" id="O32091">
    <property type="interactions" value="68"/>
</dbReference>
<dbReference type="STRING" id="224308.BSU31760"/>
<dbReference type="jPOST" id="O32091"/>
<dbReference type="PaxDb" id="224308-BSU31760"/>
<dbReference type="EnsemblBacteria" id="CAB15164">
    <property type="protein sequence ID" value="CAB15164"/>
    <property type="gene ID" value="BSU_31760"/>
</dbReference>
<dbReference type="GeneID" id="938863"/>
<dbReference type="KEGG" id="bsu:BSU31760"/>
<dbReference type="PATRIC" id="fig|224308.179.peg.3442"/>
<dbReference type="eggNOG" id="COG1335">
    <property type="taxonomic scope" value="Bacteria"/>
</dbReference>
<dbReference type="InParanoid" id="O32091"/>
<dbReference type="OrthoDB" id="9796485at2"/>
<dbReference type="PhylomeDB" id="O32091"/>
<dbReference type="BioCyc" id="BSUB:BSU31760-MONOMER"/>
<dbReference type="Proteomes" id="UP000001570">
    <property type="component" value="Chromosome"/>
</dbReference>
<dbReference type="GO" id="GO:0016787">
    <property type="term" value="F:hydrolase activity"/>
    <property type="evidence" value="ECO:0007669"/>
    <property type="project" value="UniProtKB-KW"/>
</dbReference>
<dbReference type="CDD" id="cd00431">
    <property type="entry name" value="cysteine_hydrolases"/>
    <property type="match status" value="1"/>
</dbReference>
<dbReference type="Gene3D" id="3.40.50.850">
    <property type="entry name" value="Isochorismatase-like"/>
    <property type="match status" value="1"/>
</dbReference>
<dbReference type="InterPro" id="IPR000868">
    <property type="entry name" value="Isochorismatase-like_dom"/>
</dbReference>
<dbReference type="InterPro" id="IPR050272">
    <property type="entry name" value="Isochorismatase-like_hydrls"/>
</dbReference>
<dbReference type="InterPro" id="IPR036380">
    <property type="entry name" value="Isochorismatase-like_sf"/>
</dbReference>
<dbReference type="PANTHER" id="PTHR43540:SF10">
    <property type="entry name" value="ISOCHORISMATASE"/>
    <property type="match status" value="1"/>
</dbReference>
<dbReference type="PANTHER" id="PTHR43540">
    <property type="entry name" value="PEROXYUREIDOACRYLATE/UREIDOACRYLATE AMIDOHYDROLASE-RELATED"/>
    <property type="match status" value="1"/>
</dbReference>
<dbReference type="Pfam" id="PF00857">
    <property type="entry name" value="Isochorismatase"/>
    <property type="match status" value="1"/>
</dbReference>
<dbReference type="SUPFAM" id="SSF52499">
    <property type="entry name" value="Isochorismatase-like hydrolases"/>
    <property type="match status" value="1"/>
</dbReference>
<keyword id="KW-0378">Hydrolase</keyword>
<keyword id="KW-1185">Reference proteome</keyword>
<comment type="similarity">
    <text evidence="1">Belongs to the isochorismatase family.</text>
</comment>
<gene>
    <name type="primary">pncA</name>
    <name type="synonym">yueJ</name>
    <name type="ordered locus">BSU31760</name>
</gene>
<name>PNCA_BACSU</name>
<reference key="1">
    <citation type="journal article" date="1997" name="Nature">
        <title>The complete genome sequence of the Gram-positive bacterium Bacillus subtilis.</title>
        <authorList>
            <person name="Kunst F."/>
            <person name="Ogasawara N."/>
            <person name="Moszer I."/>
            <person name="Albertini A.M."/>
            <person name="Alloni G."/>
            <person name="Azevedo V."/>
            <person name="Bertero M.G."/>
            <person name="Bessieres P."/>
            <person name="Bolotin A."/>
            <person name="Borchert S."/>
            <person name="Borriss R."/>
            <person name="Boursier L."/>
            <person name="Brans A."/>
            <person name="Braun M."/>
            <person name="Brignell S.C."/>
            <person name="Bron S."/>
            <person name="Brouillet S."/>
            <person name="Bruschi C.V."/>
            <person name="Caldwell B."/>
            <person name="Capuano V."/>
            <person name="Carter N.M."/>
            <person name="Choi S.-K."/>
            <person name="Codani J.-J."/>
            <person name="Connerton I.F."/>
            <person name="Cummings N.J."/>
            <person name="Daniel R.A."/>
            <person name="Denizot F."/>
            <person name="Devine K.M."/>
            <person name="Duesterhoeft A."/>
            <person name="Ehrlich S.D."/>
            <person name="Emmerson P.T."/>
            <person name="Entian K.-D."/>
            <person name="Errington J."/>
            <person name="Fabret C."/>
            <person name="Ferrari E."/>
            <person name="Foulger D."/>
            <person name="Fritz C."/>
            <person name="Fujita M."/>
            <person name="Fujita Y."/>
            <person name="Fuma S."/>
            <person name="Galizzi A."/>
            <person name="Galleron N."/>
            <person name="Ghim S.-Y."/>
            <person name="Glaser P."/>
            <person name="Goffeau A."/>
            <person name="Golightly E.J."/>
            <person name="Grandi G."/>
            <person name="Guiseppi G."/>
            <person name="Guy B.J."/>
            <person name="Haga K."/>
            <person name="Haiech J."/>
            <person name="Harwood C.R."/>
            <person name="Henaut A."/>
            <person name="Hilbert H."/>
            <person name="Holsappel S."/>
            <person name="Hosono S."/>
            <person name="Hullo M.-F."/>
            <person name="Itaya M."/>
            <person name="Jones L.-M."/>
            <person name="Joris B."/>
            <person name="Karamata D."/>
            <person name="Kasahara Y."/>
            <person name="Klaerr-Blanchard M."/>
            <person name="Klein C."/>
            <person name="Kobayashi Y."/>
            <person name="Koetter P."/>
            <person name="Koningstein G."/>
            <person name="Krogh S."/>
            <person name="Kumano M."/>
            <person name="Kurita K."/>
            <person name="Lapidus A."/>
            <person name="Lardinois S."/>
            <person name="Lauber J."/>
            <person name="Lazarevic V."/>
            <person name="Lee S.-M."/>
            <person name="Levine A."/>
            <person name="Liu H."/>
            <person name="Masuda S."/>
            <person name="Mauel C."/>
            <person name="Medigue C."/>
            <person name="Medina N."/>
            <person name="Mellado R.P."/>
            <person name="Mizuno M."/>
            <person name="Moestl D."/>
            <person name="Nakai S."/>
            <person name="Noback M."/>
            <person name="Noone D."/>
            <person name="O'Reilly M."/>
            <person name="Ogawa K."/>
            <person name="Ogiwara A."/>
            <person name="Oudega B."/>
            <person name="Park S.-H."/>
            <person name="Parro V."/>
            <person name="Pohl T.M."/>
            <person name="Portetelle D."/>
            <person name="Porwollik S."/>
            <person name="Prescott A.M."/>
            <person name="Presecan E."/>
            <person name="Pujic P."/>
            <person name="Purnelle B."/>
            <person name="Rapoport G."/>
            <person name="Rey M."/>
            <person name="Reynolds S."/>
            <person name="Rieger M."/>
            <person name="Rivolta C."/>
            <person name="Rocha E."/>
            <person name="Roche B."/>
            <person name="Rose M."/>
            <person name="Sadaie Y."/>
            <person name="Sato T."/>
            <person name="Scanlan E."/>
            <person name="Schleich S."/>
            <person name="Schroeter R."/>
            <person name="Scoffone F."/>
            <person name="Sekiguchi J."/>
            <person name="Sekowska A."/>
            <person name="Seror S.J."/>
            <person name="Serror P."/>
            <person name="Shin B.-S."/>
            <person name="Soldo B."/>
            <person name="Sorokin A."/>
            <person name="Tacconi E."/>
            <person name="Takagi T."/>
            <person name="Takahashi H."/>
            <person name="Takemaru K."/>
            <person name="Takeuchi M."/>
            <person name="Tamakoshi A."/>
            <person name="Tanaka T."/>
            <person name="Terpstra P."/>
            <person name="Tognoni A."/>
            <person name="Tosato V."/>
            <person name="Uchiyama S."/>
            <person name="Vandenbol M."/>
            <person name="Vannier F."/>
            <person name="Vassarotti A."/>
            <person name="Viari A."/>
            <person name="Wambutt R."/>
            <person name="Wedler E."/>
            <person name="Wedler H."/>
            <person name="Weitzenegger T."/>
            <person name="Winters P."/>
            <person name="Wipat A."/>
            <person name="Yamamoto H."/>
            <person name="Yamane K."/>
            <person name="Yasumoto K."/>
            <person name="Yata K."/>
            <person name="Yoshida K."/>
            <person name="Yoshikawa H.-F."/>
            <person name="Zumstein E."/>
            <person name="Yoshikawa H."/>
            <person name="Danchin A."/>
        </authorList>
    </citation>
    <scope>NUCLEOTIDE SEQUENCE [LARGE SCALE GENOMIC DNA]</scope>
    <source>
        <strain>168</strain>
    </source>
</reference>
<accession>O32091</accession>
<sequence>MKKALICIDYTNDFVASDGKLTCGEPGRMIEEAIVNLTKEFITNGDYVVLAVDSHDEGDQYHPETRLFPPHNIKGTEGKDLYGKLLPLYQKHEHEPNVYYMEKTRYSAFAGTDLELKLRERQIGELHLAGVCTDICVLHTAVDAYNKGFRIVVHKQAVASFNQEGHAWALSHFANSIGAQVAE</sequence>
<proteinExistence type="inferred from homology"/>